<comment type="function">
    <text>Catalyzes the conversion of geranylgeranyl diphosphate to the gibberellin precursor ent-copalyl diphosphate.</text>
</comment>
<comment type="catalytic activity">
    <reaction>
        <text>(2E,6E,10E)-geranylgeranyl diphosphate = ent-copalyl diphosphate</text>
        <dbReference type="Rhea" id="RHEA:14841"/>
        <dbReference type="ChEBI" id="CHEBI:58553"/>
        <dbReference type="ChEBI" id="CHEBI:58756"/>
        <dbReference type="EC" id="5.5.1.13"/>
    </reaction>
</comment>
<comment type="cofactor">
    <cofactor evidence="4">
        <name>Mg(2+)</name>
        <dbReference type="ChEBI" id="CHEBI:18420"/>
    </cofactor>
</comment>
<comment type="pathway">
    <text>Plant hormone biosynthesis; gibberellin biosynthesis.</text>
</comment>
<comment type="subcellular location">
    <subcellularLocation>
        <location>Plastid</location>
        <location>Chloroplast</location>
    </subcellularLocation>
</comment>
<comment type="domain">
    <text>The Asp-Xaa-Asp-Asp (DXDD) motif is important for the catalytic activity, presumably through binding to Mg(2+).</text>
</comment>
<comment type="similarity">
    <text evidence="4">Belongs to the terpene synthase family.</text>
</comment>
<keyword id="KW-0150">Chloroplast</keyword>
<keyword id="KW-0413">Isomerase</keyword>
<keyword id="KW-0460">Magnesium</keyword>
<keyword id="KW-0479">Metal-binding</keyword>
<keyword id="KW-0934">Plastid</keyword>
<keyword id="KW-0809">Transit peptide</keyword>
<sequence length="801" mass="92718">MFTHFSTHFHLPSSSSLFFLHPFYKSSSLGAVSFVAKDKEKRCRAISKSRTQEYEGVFQTNVATLKLSEINVEDVIVIDDEEEQDIRVGLVNKIKSILSSLEDGEITISAYDTAWVALVEDVNAISTPQFPSSLEWIAKNQLQDGSWGDSRLFSAHDRIINTLACVIALRSWNMHSEKCDKGMIFFRENLSKLENENEEHMPIGFEVAFPSLLEGARGIKPLMCPNDSPILKNIFEKRDEKLTRIPKEIMHKVPTTLLHSLEGMSGLDWKQLLKLQSQDGSFLFSPSSTAFALMQTKDGNCLKYLNNVVKKFNGGVPNVYPVDLFEHIWVVDRLERLGISRFFRHEIKDCMNYVSKIWSEKGICWARNSNVQDIDDTAMAFRLLRLHGHQVSAHVFKHFERNGEFFCFAGQCTQAVTGMYNLFRASQVLFPGEKILEHAKHFSAKVLKEKREANELIDKWIIMKNLPEEVGYALDMPWYANLDRIETRFYIDQYGAESDVWIGKTLYRMAYVNNNNYLELAKLDYNNCQAQHLIEWNVIQTWYLESRLGEFGLSKRDLLLAYFLATGSIFEPERSHERLAWAKTTALLETIKCYVRNEDLRKDFAKKFNDHIDVRDYSIARRMKRNKTEHELVESLFATIGEISWDVRLSYGHEIGYDMHQCWKKWLSSWQSEGDKCEGEAELLIQIINLCSNHWISEGPSMQSTIQHLLQLTNSICHKLSCYQKDKELKGISCQENITNSEVESKMQELVQMVFQKCPNDIDFNVKNTFFTIAKSFYYAAFCDSRTINFHIAKVLFEKVV</sequence>
<proteinExistence type="evidence at transcript level"/>
<feature type="transit peptide" description="Chloroplast" evidence="3">
    <location>
        <begin position="1"/>
        <end status="unknown"/>
    </location>
</feature>
<feature type="chain" id="PRO_0000033624" description="Ent-copalyl diphosphate synthase, chloroplastic">
    <location>
        <begin status="unknown"/>
        <end position="801"/>
    </location>
</feature>
<feature type="short sequence motif" description="DXDD motif">
    <location>
        <begin position="373"/>
        <end position="376"/>
    </location>
</feature>
<feature type="binding site" evidence="2">
    <location>
        <position position="241"/>
    </location>
    <ligand>
        <name>substrate</name>
    </ligand>
</feature>
<feature type="binding site" evidence="1">
    <location>
        <position position="373"/>
    </location>
    <ligand>
        <name>Mg(2+)</name>
        <dbReference type="ChEBI" id="CHEBI:18420"/>
    </ligand>
</feature>
<feature type="binding site" evidence="1">
    <location>
        <position position="375"/>
    </location>
    <ligand>
        <name>Mg(2+)</name>
        <dbReference type="ChEBI" id="CHEBI:18420"/>
    </ligand>
</feature>
<feature type="binding site" evidence="2">
    <location>
        <position position="459"/>
    </location>
    <ligand>
        <name>substrate</name>
    </ligand>
</feature>
<name>KSA_PEA</name>
<evidence type="ECO:0000250" key="1">
    <source>
        <dbReference type="UniProtKB" id="C7BKP9"/>
    </source>
</evidence>
<evidence type="ECO:0000250" key="2">
    <source>
        <dbReference type="UniProtKB" id="Q38802"/>
    </source>
</evidence>
<evidence type="ECO:0000255" key="3"/>
<evidence type="ECO:0000305" key="4"/>
<organism>
    <name type="scientific">Pisum sativum</name>
    <name type="common">Garden pea</name>
    <name type="synonym">Lathyrus oleraceus</name>
    <dbReference type="NCBI Taxonomy" id="3888"/>
    <lineage>
        <taxon>Eukaryota</taxon>
        <taxon>Viridiplantae</taxon>
        <taxon>Streptophyta</taxon>
        <taxon>Embryophyta</taxon>
        <taxon>Tracheophyta</taxon>
        <taxon>Spermatophyta</taxon>
        <taxon>Magnoliopsida</taxon>
        <taxon>eudicotyledons</taxon>
        <taxon>Gunneridae</taxon>
        <taxon>Pentapetalae</taxon>
        <taxon>rosids</taxon>
        <taxon>fabids</taxon>
        <taxon>Fabales</taxon>
        <taxon>Fabaceae</taxon>
        <taxon>Papilionoideae</taxon>
        <taxon>50 kb inversion clade</taxon>
        <taxon>NPAAA clade</taxon>
        <taxon>Hologalegina</taxon>
        <taxon>IRL clade</taxon>
        <taxon>Fabeae</taxon>
        <taxon>Pisum</taxon>
    </lineage>
</organism>
<reference key="1">
    <citation type="journal article" date="1997" name="Plant J.">
        <title>The LS locus of pea encodes the gibberellin biosynthesis enzyme ent-kaurene synthase A.</title>
        <authorList>
            <person name="Ait-Ali T."/>
            <person name="Swain S.M."/>
            <person name="Reid J.B."/>
            <person name="Sun T.-P."/>
            <person name="Kamiya Y."/>
        </authorList>
    </citation>
    <scope>NUCLEOTIDE SEQUENCE [MRNA]</scope>
</reference>
<dbReference type="EC" id="5.5.1.13"/>
<dbReference type="EMBL" id="U63652">
    <property type="protein sequence ID" value="AAB58822.1"/>
    <property type="molecule type" value="mRNA"/>
</dbReference>
<dbReference type="PIR" id="T06783">
    <property type="entry name" value="T06783"/>
</dbReference>
<dbReference type="SMR" id="O04408"/>
<dbReference type="UniPathway" id="UPA00390"/>
<dbReference type="GO" id="GO:0009507">
    <property type="term" value="C:chloroplast"/>
    <property type="evidence" value="ECO:0007669"/>
    <property type="project" value="UniProtKB-SubCell"/>
</dbReference>
<dbReference type="GO" id="GO:0009905">
    <property type="term" value="F:ent-copalyl diphosphate synthase activity"/>
    <property type="evidence" value="ECO:0007669"/>
    <property type="project" value="UniProtKB-EC"/>
</dbReference>
<dbReference type="GO" id="GO:0000287">
    <property type="term" value="F:magnesium ion binding"/>
    <property type="evidence" value="ECO:0007669"/>
    <property type="project" value="TreeGrafter"/>
</dbReference>
<dbReference type="GO" id="GO:0010333">
    <property type="term" value="F:terpene synthase activity"/>
    <property type="evidence" value="ECO:0007669"/>
    <property type="project" value="InterPro"/>
</dbReference>
<dbReference type="GO" id="GO:0009686">
    <property type="term" value="P:gibberellin biosynthetic process"/>
    <property type="evidence" value="ECO:0007669"/>
    <property type="project" value="UniProtKB-UniPathway"/>
</dbReference>
<dbReference type="CDD" id="cd00684">
    <property type="entry name" value="Terpene_cyclase_plant_C1"/>
    <property type="match status" value="1"/>
</dbReference>
<dbReference type="FunFam" id="1.50.10.160:FF:000001">
    <property type="entry name" value="Ent-copalyl diphosphate synthase"/>
    <property type="match status" value="1"/>
</dbReference>
<dbReference type="FunFam" id="1.50.10.130:FF:000002">
    <property type="entry name" value="Ent-copalyl diphosphate synthase, chloroplastic"/>
    <property type="match status" value="1"/>
</dbReference>
<dbReference type="Gene3D" id="1.50.10.160">
    <property type="match status" value="1"/>
</dbReference>
<dbReference type="Gene3D" id="1.10.600.10">
    <property type="entry name" value="Farnesyl Diphosphate Synthase"/>
    <property type="match status" value="1"/>
</dbReference>
<dbReference type="Gene3D" id="1.50.10.130">
    <property type="entry name" value="Terpene synthase, N-terminal domain"/>
    <property type="match status" value="1"/>
</dbReference>
<dbReference type="InterPro" id="IPR008949">
    <property type="entry name" value="Isoprenoid_synthase_dom_sf"/>
</dbReference>
<dbReference type="InterPro" id="IPR044814">
    <property type="entry name" value="Terpene_cyclase_plant_C1"/>
</dbReference>
<dbReference type="InterPro" id="IPR001906">
    <property type="entry name" value="Terpene_synth_N"/>
</dbReference>
<dbReference type="InterPro" id="IPR036965">
    <property type="entry name" value="Terpene_synth_N_sf"/>
</dbReference>
<dbReference type="InterPro" id="IPR050148">
    <property type="entry name" value="Terpene_synthase-like"/>
</dbReference>
<dbReference type="InterPro" id="IPR008930">
    <property type="entry name" value="Terpenoid_cyclase/PrenylTrfase"/>
</dbReference>
<dbReference type="PANTHER" id="PTHR31739">
    <property type="entry name" value="ENT-COPALYL DIPHOSPHATE SYNTHASE, CHLOROPLASTIC"/>
    <property type="match status" value="1"/>
</dbReference>
<dbReference type="PANTHER" id="PTHR31739:SF4">
    <property type="entry name" value="ENT-COPALYL DIPHOSPHATE SYNTHASE, CHLOROPLASTIC"/>
    <property type="match status" value="1"/>
</dbReference>
<dbReference type="Pfam" id="PF01397">
    <property type="entry name" value="Terpene_synth"/>
    <property type="match status" value="1"/>
</dbReference>
<dbReference type="SFLD" id="SFLDG01014">
    <property type="entry name" value="Terpene_Cyclase_Like_1_N-term"/>
    <property type="match status" value="1"/>
</dbReference>
<dbReference type="SFLD" id="SFLDG01605">
    <property type="entry name" value="Terpene_Cyclase_Like_1_N-term"/>
    <property type="match status" value="1"/>
</dbReference>
<dbReference type="SUPFAM" id="SSF48239">
    <property type="entry name" value="Terpenoid cyclases/Protein prenyltransferases"/>
    <property type="match status" value="2"/>
</dbReference>
<dbReference type="SUPFAM" id="SSF48576">
    <property type="entry name" value="Terpenoid synthases"/>
    <property type="match status" value="1"/>
</dbReference>
<protein>
    <recommendedName>
        <fullName>Ent-copalyl diphosphate synthase, chloroplastic</fullName>
        <shortName>Ent-CDP synthase</shortName>
        <ecNumber>5.5.1.13</ecNumber>
    </recommendedName>
    <alternativeName>
        <fullName>Ent-copalyl diphosphate synthase</fullName>
    </alternativeName>
    <alternativeName>
        <fullName>Ent-kaurene synthase A</fullName>
        <shortName>KSA</shortName>
    </alternativeName>
</protein>
<accession>O04408</accession>